<gene>
    <name evidence="1" type="primary">msrB</name>
    <name type="ordered locus">PSPA7_2328</name>
</gene>
<protein>
    <recommendedName>
        <fullName evidence="1">Peptide methionine sulfoxide reductase MsrB</fullName>
        <ecNumber evidence="1">1.8.4.12</ecNumber>
    </recommendedName>
    <alternativeName>
        <fullName evidence="1">Peptide-methionine (R)-S-oxide reductase</fullName>
    </alternativeName>
</protein>
<sequence>MSKIDKPLDSWREELTEEQFHICRLGGTERAFSGEYHATKTPGVYHCTCCGTALFDSDAKYDSGSGWPSYFQPVDGEAVRELDDFSHGMHRIEVRCGRCDAHLGHVFPDGPRPTGLRYCINSASLKLVPREG</sequence>
<keyword id="KW-0479">Metal-binding</keyword>
<keyword id="KW-0560">Oxidoreductase</keyword>
<keyword id="KW-0862">Zinc</keyword>
<reference key="1">
    <citation type="submission" date="2007-06" db="EMBL/GenBank/DDBJ databases">
        <authorList>
            <person name="Dodson R.J."/>
            <person name="Harkins D."/>
            <person name="Paulsen I.T."/>
        </authorList>
    </citation>
    <scope>NUCLEOTIDE SEQUENCE [LARGE SCALE GENOMIC DNA]</scope>
    <source>
        <strain>DSM 24068 / PA7</strain>
    </source>
</reference>
<dbReference type="EC" id="1.8.4.12" evidence="1"/>
<dbReference type="EMBL" id="CP000744">
    <property type="protein sequence ID" value="ABR84644.1"/>
    <property type="molecule type" value="Genomic_DNA"/>
</dbReference>
<dbReference type="RefSeq" id="WP_003154987.1">
    <property type="nucleotide sequence ID" value="NC_009656.1"/>
</dbReference>
<dbReference type="SMR" id="A6V3R3"/>
<dbReference type="GeneID" id="77220670"/>
<dbReference type="KEGG" id="pap:PSPA7_2328"/>
<dbReference type="HOGENOM" id="CLU_031040_8_5_6"/>
<dbReference type="Proteomes" id="UP000001582">
    <property type="component" value="Chromosome"/>
</dbReference>
<dbReference type="GO" id="GO:0005737">
    <property type="term" value="C:cytoplasm"/>
    <property type="evidence" value="ECO:0007669"/>
    <property type="project" value="TreeGrafter"/>
</dbReference>
<dbReference type="GO" id="GO:0033743">
    <property type="term" value="F:peptide-methionine (R)-S-oxide reductase activity"/>
    <property type="evidence" value="ECO:0007669"/>
    <property type="project" value="UniProtKB-UniRule"/>
</dbReference>
<dbReference type="GO" id="GO:0008270">
    <property type="term" value="F:zinc ion binding"/>
    <property type="evidence" value="ECO:0007669"/>
    <property type="project" value="UniProtKB-UniRule"/>
</dbReference>
<dbReference type="GO" id="GO:0030091">
    <property type="term" value="P:protein repair"/>
    <property type="evidence" value="ECO:0007669"/>
    <property type="project" value="InterPro"/>
</dbReference>
<dbReference type="GO" id="GO:0006979">
    <property type="term" value="P:response to oxidative stress"/>
    <property type="evidence" value="ECO:0007669"/>
    <property type="project" value="InterPro"/>
</dbReference>
<dbReference type="FunFam" id="2.170.150.20:FF:000001">
    <property type="entry name" value="Peptide methionine sulfoxide reductase MsrB"/>
    <property type="match status" value="1"/>
</dbReference>
<dbReference type="Gene3D" id="2.170.150.20">
    <property type="entry name" value="Peptide methionine sulfoxide reductase"/>
    <property type="match status" value="1"/>
</dbReference>
<dbReference type="HAMAP" id="MF_01400">
    <property type="entry name" value="MsrB"/>
    <property type="match status" value="1"/>
</dbReference>
<dbReference type="InterPro" id="IPR028427">
    <property type="entry name" value="Met_Sox_Rdtase_MsrB"/>
</dbReference>
<dbReference type="InterPro" id="IPR002579">
    <property type="entry name" value="Met_Sox_Rdtase_MsrB_dom"/>
</dbReference>
<dbReference type="InterPro" id="IPR011057">
    <property type="entry name" value="Mss4-like_sf"/>
</dbReference>
<dbReference type="NCBIfam" id="TIGR00357">
    <property type="entry name" value="peptide-methionine (R)-S-oxide reductase MsrB"/>
    <property type="match status" value="1"/>
</dbReference>
<dbReference type="PANTHER" id="PTHR10173">
    <property type="entry name" value="METHIONINE SULFOXIDE REDUCTASE"/>
    <property type="match status" value="1"/>
</dbReference>
<dbReference type="PANTHER" id="PTHR10173:SF52">
    <property type="entry name" value="METHIONINE-R-SULFOXIDE REDUCTASE B1"/>
    <property type="match status" value="1"/>
</dbReference>
<dbReference type="Pfam" id="PF01641">
    <property type="entry name" value="SelR"/>
    <property type="match status" value="1"/>
</dbReference>
<dbReference type="SUPFAM" id="SSF51316">
    <property type="entry name" value="Mss4-like"/>
    <property type="match status" value="1"/>
</dbReference>
<dbReference type="PROSITE" id="PS51790">
    <property type="entry name" value="MSRB"/>
    <property type="match status" value="1"/>
</dbReference>
<organism>
    <name type="scientific">Pseudomonas paraeruginosa (strain DSM 24068 / PA7)</name>
    <name type="common">Pseudomonas aeruginosa (strain PA7)</name>
    <dbReference type="NCBI Taxonomy" id="381754"/>
    <lineage>
        <taxon>Bacteria</taxon>
        <taxon>Pseudomonadati</taxon>
        <taxon>Pseudomonadota</taxon>
        <taxon>Gammaproteobacteria</taxon>
        <taxon>Pseudomonadales</taxon>
        <taxon>Pseudomonadaceae</taxon>
        <taxon>Pseudomonas</taxon>
        <taxon>Pseudomonas paraeruginosa</taxon>
    </lineage>
</organism>
<proteinExistence type="inferred from homology"/>
<comment type="catalytic activity">
    <reaction evidence="1">
        <text>L-methionyl-[protein] + [thioredoxin]-disulfide + H2O = L-methionyl-(R)-S-oxide-[protein] + [thioredoxin]-dithiol</text>
        <dbReference type="Rhea" id="RHEA:24164"/>
        <dbReference type="Rhea" id="RHEA-COMP:10698"/>
        <dbReference type="Rhea" id="RHEA-COMP:10700"/>
        <dbReference type="Rhea" id="RHEA-COMP:12313"/>
        <dbReference type="Rhea" id="RHEA-COMP:12314"/>
        <dbReference type="ChEBI" id="CHEBI:15377"/>
        <dbReference type="ChEBI" id="CHEBI:16044"/>
        <dbReference type="ChEBI" id="CHEBI:29950"/>
        <dbReference type="ChEBI" id="CHEBI:45764"/>
        <dbReference type="ChEBI" id="CHEBI:50058"/>
        <dbReference type="EC" id="1.8.4.12"/>
    </reaction>
</comment>
<comment type="cofactor">
    <cofactor evidence="1">
        <name>Zn(2+)</name>
        <dbReference type="ChEBI" id="CHEBI:29105"/>
    </cofactor>
    <text evidence="1">Binds 1 zinc ion per subunit. The zinc ion is important for the structural integrity of the protein.</text>
</comment>
<comment type="similarity">
    <text evidence="1">Belongs to the MsrB Met sulfoxide reductase family.</text>
</comment>
<accession>A6V3R3</accession>
<name>MSRB_PSEP7</name>
<feature type="chain" id="PRO_1000068282" description="Peptide methionine sulfoxide reductase MsrB">
    <location>
        <begin position="1"/>
        <end position="132"/>
    </location>
</feature>
<feature type="domain" description="MsrB" evidence="2">
    <location>
        <begin position="8"/>
        <end position="130"/>
    </location>
</feature>
<feature type="active site" description="Nucleophile" evidence="2">
    <location>
        <position position="119"/>
    </location>
</feature>
<feature type="binding site" evidence="2">
    <location>
        <position position="47"/>
    </location>
    <ligand>
        <name>Zn(2+)</name>
        <dbReference type="ChEBI" id="CHEBI:29105"/>
    </ligand>
</feature>
<feature type="binding site" evidence="2">
    <location>
        <position position="50"/>
    </location>
    <ligand>
        <name>Zn(2+)</name>
        <dbReference type="ChEBI" id="CHEBI:29105"/>
    </ligand>
</feature>
<feature type="binding site" evidence="2">
    <location>
        <position position="96"/>
    </location>
    <ligand>
        <name>Zn(2+)</name>
        <dbReference type="ChEBI" id="CHEBI:29105"/>
    </ligand>
</feature>
<feature type="binding site" evidence="2">
    <location>
        <position position="99"/>
    </location>
    <ligand>
        <name>Zn(2+)</name>
        <dbReference type="ChEBI" id="CHEBI:29105"/>
    </ligand>
</feature>
<evidence type="ECO:0000255" key="1">
    <source>
        <dbReference type="HAMAP-Rule" id="MF_01400"/>
    </source>
</evidence>
<evidence type="ECO:0000255" key="2">
    <source>
        <dbReference type="PROSITE-ProRule" id="PRU01126"/>
    </source>
</evidence>